<protein>
    <recommendedName>
        <fullName evidence="4">Cilia- and flagella-associated protein 206</fullName>
    </recommendedName>
</protein>
<name>CF206_MOUSE</name>
<gene>
    <name evidence="5" type="primary">Cfap206</name>
</gene>
<organism>
    <name type="scientific">Mus musculus</name>
    <name type="common">Mouse</name>
    <dbReference type="NCBI Taxonomy" id="10090"/>
    <lineage>
        <taxon>Eukaryota</taxon>
        <taxon>Metazoa</taxon>
        <taxon>Chordata</taxon>
        <taxon>Craniata</taxon>
        <taxon>Vertebrata</taxon>
        <taxon>Euteleostomi</taxon>
        <taxon>Mammalia</taxon>
        <taxon>Eutheria</taxon>
        <taxon>Euarchontoglires</taxon>
        <taxon>Glires</taxon>
        <taxon>Rodentia</taxon>
        <taxon>Myomorpha</taxon>
        <taxon>Muroidea</taxon>
        <taxon>Muridae</taxon>
        <taxon>Murinae</taxon>
        <taxon>Mus</taxon>
        <taxon>Mus</taxon>
    </lineage>
</organism>
<dbReference type="EMBL" id="AL928738">
    <property type="protein sequence ID" value="CAM26876.1"/>
    <property type="molecule type" value="Genomic_DNA"/>
</dbReference>
<dbReference type="EMBL" id="AL928738">
    <property type="protein sequence ID" value="CAM26877.1"/>
    <property type="molecule type" value="Genomic_DNA"/>
</dbReference>
<dbReference type="EMBL" id="AL928738">
    <property type="protein sequence ID" value="CAM26878.1"/>
    <property type="status" value="ALT_SEQ"/>
    <property type="molecule type" value="Genomic_DNA"/>
</dbReference>
<dbReference type="EMBL" id="CH466538">
    <property type="protein sequence ID" value="EDL05471.1"/>
    <property type="molecule type" value="Genomic_DNA"/>
</dbReference>
<dbReference type="EMBL" id="BC058220">
    <property type="protein sequence ID" value="AAH58220.1"/>
    <property type="status" value="ALT_INIT"/>
    <property type="molecule type" value="mRNA"/>
</dbReference>
<dbReference type="EMBL" id="AK005650">
    <property type="protein sequence ID" value="BAB24168.1"/>
    <property type="status" value="ALT_INIT"/>
    <property type="molecule type" value="mRNA"/>
</dbReference>
<dbReference type="CCDS" id="CCDS18031.2">
    <molecule id="Q6PE87-2"/>
</dbReference>
<dbReference type="CCDS" id="CCDS84713.1">
    <molecule id="Q6PE87-1"/>
</dbReference>
<dbReference type="RefSeq" id="NP_001333991.1">
    <molecule id="Q6PE87-1"/>
    <property type="nucleotide sequence ID" value="NM_001347062.1"/>
</dbReference>
<dbReference type="RefSeq" id="NP_081317.4">
    <molecule id="Q6PE87-2"/>
    <property type="nucleotide sequence ID" value="NM_027041.4"/>
</dbReference>
<dbReference type="RefSeq" id="XP_006538295.1">
    <molecule id="Q6PE87-1"/>
    <property type="nucleotide sequence ID" value="XM_006538232.4"/>
</dbReference>
<dbReference type="RefSeq" id="XP_006538296.1">
    <molecule id="Q6PE87-1"/>
    <property type="nucleotide sequence ID" value="XM_006538233.4"/>
</dbReference>
<dbReference type="SMR" id="Q6PE87"/>
<dbReference type="ComplexPortal" id="CPX-8161">
    <property type="entry name" value="Radial spoke complex, ciliiar variant"/>
</dbReference>
<dbReference type="ComplexPortal" id="CPX-8162">
    <property type="entry name" value="Radial spoke complex, flagellar variant"/>
</dbReference>
<dbReference type="FunCoup" id="Q6PE87">
    <property type="interactions" value="102"/>
</dbReference>
<dbReference type="STRING" id="10090.ENSMUSP00000029971"/>
<dbReference type="PhosphoSitePlus" id="Q6PE87"/>
<dbReference type="SwissPalm" id="Q6PE87"/>
<dbReference type="PaxDb" id="10090-ENSMUSP00000103771"/>
<dbReference type="ProteomicsDB" id="283892">
    <molecule id="Q6PE87-1"/>
</dbReference>
<dbReference type="ProteomicsDB" id="283893">
    <molecule id="Q6PE87-2"/>
</dbReference>
<dbReference type="DNASU" id="69329"/>
<dbReference type="Ensembl" id="ENSMUST00000029971.12">
    <molecule id="Q6PE87-1"/>
    <property type="protein sequence ID" value="ENSMUSP00000029971.6"/>
    <property type="gene ID" value="ENSMUSG00000028294.16"/>
</dbReference>
<dbReference type="Ensembl" id="ENSMUST00000108136.8">
    <molecule id="Q6PE87-2"/>
    <property type="protein sequence ID" value="ENSMUSP00000103771.2"/>
    <property type="gene ID" value="ENSMUSG00000028294.16"/>
</dbReference>
<dbReference type="GeneID" id="69329"/>
<dbReference type="KEGG" id="mmu:69329"/>
<dbReference type="UCSC" id="uc008sgj.2">
    <molecule id="Q6PE87-2"/>
    <property type="organism name" value="mouse"/>
</dbReference>
<dbReference type="AGR" id="MGI:1916579"/>
<dbReference type="CTD" id="154313"/>
<dbReference type="MGI" id="MGI:1916579">
    <property type="gene designation" value="Cfap206"/>
</dbReference>
<dbReference type="VEuPathDB" id="HostDB:ENSMUSG00000028294"/>
<dbReference type="eggNOG" id="ENOG502QTGJ">
    <property type="taxonomic scope" value="Eukaryota"/>
</dbReference>
<dbReference type="GeneTree" id="ENSGT00390000016036"/>
<dbReference type="HOGENOM" id="CLU_030061_0_0_1"/>
<dbReference type="InParanoid" id="Q6PE87"/>
<dbReference type="OMA" id="QLMELMC"/>
<dbReference type="OrthoDB" id="10251073at2759"/>
<dbReference type="PhylomeDB" id="Q6PE87"/>
<dbReference type="TreeFam" id="TF323439"/>
<dbReference type="BioGRID-ORCS" id="69329">
    <property type="hits" value="0 hits in 30 CRISPR screens"/>
</dbReference>
<dbReference type="ChiTaRS" id="Cfap206">
    <property type="organism name" value="mouse"/>
</dbReference>
<dbReference type="PRO" id="PR:Q6PE87"/>
<dbReference type="Proteomes" id="UP000000589">
    <property type="component" value="Chromosome 4"/>
</dbReference>
<dbReference type="RNAct" id="Q6PE87">
    <property type="molecule type" value="protein"/>
</dbReference>
<dbReference type="Bgee" id="ENSMUSG00000028294">
    <property type="expression patterns" value="Expressed in spermatid and 78 other cell types or tissues"/>
</dbReference>
<dbReference type="ExpressionAtlas" id="Q6PE87">
    <property type="expression patterns" value="baseline and differential"/>
</dbReference>
<dbReference type="GO" id="GO:0005930">
    <property type="term" value="C:axoneme"/>
    <property type="evidence" value="ECO:0000314"/>
    <property type="project" value="UniProtKB"/>
</dbReference>
<dbReference type="GO" id="GO:0036064">
    <property type="term" value="C:ciliary basal body"/>
    <property type="evidence" value="ECO:0000314"/>
    <property type="project" value="UniProtKB"/>
</dbReference>
<dbReference type="GO" id="GO:0031514">
    <property type="term" value="C:motile cilium"/>
    <property type="evidence" value="ECO:0000250"/>
    <property type="project" value="UniProtKB"/>
</dbReference>
<dbReference type="GO" id="GO:0001534">
    <property type="term" value="C:radial spoke"/>
    <property type="evidence" value="ECO:0000250"/>
    <property type="project" value="UniProtKB"/>
</dbReference>
<dbReference type="GO" id="GO:0035082">
    <property type="term" value="P:axoneme assembly"/>
    <property type="evidence" value="ECO:0000250"/>
    <property type="project" value="UniProtKB"/>
</dbReference>
<dbReference type="GO" id="GO:0003341">
    <property type="term" value="P:cilium movement"/>
    <property type="evidence" value="ECO:0000250"/>
    <property type="project" value="UniProtKB"/>
</dbReference>
<dbReference type="GO" id="GO:0003356">
    <property type="term" value="P:regulation of cilium beat frequency"/>
    <property type="evidence" value="ECO:0000315"/>
    <property type="project" value="UniProtKB"/>
</dbReference>
<dbReference type="GO" id="GO:1901317">
    <property type="term" value="P:regulation of flagellated sperm motility"/>
    <property type="evidence" value="ECO:0000315"/>
    <property type="project" value="UniProtKB"/>
</dbReference>
<dbReference type="GO" id="GO:0007288">
    <property type="term" value="P:sperm axoneme assembly"/>
    <property type="evidence" value="ECO:0000315"/>
    <property type="project" value="UniProtKB"/>
</dbReference>
<dbReference type="InterPro" id="IPR021897">
    <property type="entry name" value="FAP206"/>
</dbReference>
<dbReference type="PANTHER" id="PTHR21442">
    <property type="entry name" value="CILIA- AND FLAGELLA-ASSOCIATED PROTEIN 206"/>
    <property type="match status" value="1"/>
</dbReference>
<dbReference type="PANTHER" id="PTHR21442:SF0">
    <property type="entry name" value="CILIA- AND FLAGELLA-ASSOCIATED PROTEIN 206"/>
    <property type="match status" value="1"/>
</dbReference>
<dbReference type="Pfam" id="PF12018">
    <property type="entry name" value="FAP206"/>
    <property type="match status" value="1"/>
</dbReference>
<feature type="chain" id="PRO_0000358910" description="Cilia- and flagella-associated protein 206">
    <location>
        <begin position="1"/>
        <end position="622"/>
    </location>
</feature>
<feature type="region of interest" description="Disordered" evidence="1">
    <location>
        <begin position="568"/>
        <end position="593"/>
    </location>
</feature>
<feature type="splice variant" id="VSP_036124" description="In isoform 2." evidence="3">
    <original>MRDVDK</original>
    <variation>VNMAFS</variation>
    <location>
        <begin position="499"/>
        <end position="504"/>
    </location>
</feature>
<feature type="splice variant" id="VSP_036125" description="In isoform 2." evidence="3">
    <location>
        <begin position="505"/>
        <end position="622"/>
    </location>
</feature>
<keyword id="KW-0025">Alternative splicing</keyword>
<keyword id="KW-0966">Cell projection</keyword>
<keyword id="KW-0969">Cilium</keyword>
<keyword id="KW-0970">Cilium biogenesis/degradation</keyword>
<keyword id="KW-0963">Cytoplasm</keyword>
<keyword id="KW-0206">Cytoskeleton</keyword>
<keyword id="KW-1185">Reference proteome</keyword>
<evidence type="ECO:0000256" key="1">
    <source>
        <dbReference type="SAM" id="MobiDB-lite"/>
    </source>
</evidence>
<evidence type="ECO:0000269" key="2">
    <source>
    </source>
</evidence>
<evidence type="ECO:0000303" key="3">
    <source>
    </source>
</evidence>
<evidence type="ECO:0000305" key="4"/>
<evidence type="ECO:0000312" key="5">
    <source>
        <dbReference type="MGI" id="MGI:1916579"/>
    </source>
</evidence>
<comment type="function">
    <molecule>Isoform 1</molecule>
    <text evidence="2">Essential for sperm motility and is involved in the regulation of the beating frequency of motile cilia on the epithelial cells of the respiratory tract (PubMed:32376681). Required for the establishment of radial spokes in sperm flagella (PubMed:32376681).</text>
</comment>
<comment type="function">
    <molecule>Isoform 2</molecule>
    <text evidence="2">Essential for sperm motility and is involved in the regulation of the beating frequency of motile cilia on the epithelial cells of the respiratory tract (PubMed:32376681). Required for the establishment of radial spokes in sperm flagella (PubMed:32376681).</text>
</comment>
<comment type="subcellular location">
    <subcellularLocation>
        <location evidence="2">Cytoplasm</location>
        <location evidence="2">Cytoskeleton</location>
        <location evidence="2">Cilium axoneme</location>
    </subcellularLocation>
    <subcellularLocation>
        <location evidence="2">Cytoplasm</location>
        <location evidence="2">Cytoskeleton</location>
        <location evidence="2">Cilium basal body</location>
    </subcellularLocation>
</comment>
<comment type="alternative products">
    <event type="alternative splicing"/>
    <isoform>
        <id>Q6PE87-1</id>
        <name>1</name>
        <sequence type="displayed"/>
    </isoform>
    <isoform>
        <id>Q6PE87-2</id>
        <name>2</name>
        <sequence type="described" ref="VSP_036124 VSP_036125"/>
    </isoform>
</comment>
<comment type="tissue specificity">
    <molecule>Isoform 1</molecule>
    <text evidence="2">Expressed in the sperm, oviduct, lung, nasal cavity, brain ependyma and choroid plexus.</text>
</comment>
<comment type="tissue specificity">
    <molecule>Isoform 2</molecule>
    <text evidence="2">Expressed in the sperm, oviduct, lung, nasal cavity, brain ependyma and choroid plexus.</text>
</comment>
<comment type="developmental stage">
    <text evidence="2">Expressed in the left-right organiser at embryonic day 8.0 dpc and at 17.5 dpc, expressed in the airway epithelia and brain ependymal tissues.</text>
</comment>
<comment type="disruption phenotype">
    <text evidence="2">Mice postnatally develop hydrocephalus, show impaired mucociliary clearance of the airways and are characterized by male infertility.</text>
</comment>
<comment type="similarity">
    <text evidence="4">Belongs to the CFAP206 family.</text>
</comment>
<comment type="sequence caution" evidence="4">
    <conflict type="erroneous initiation">
        <sequence resource="EMBL-CDS" id="AAH58220"/>
    </conflict>
</comment>
<comment type="sequence caution" evidence="4">
    <conflict type="erroneous initiation">
        <sequence resource="EMBL-CDS" id="BAB24168"/>
    </conflict>
</comment>
<comment type="sequence caution" evidence="4">
    <conflict type="erroneous gene model prediction">
        <sequence resource="EMBL-CDS" id="CAM26878"/>
    </conflict>
</comment>
<reference key="1">
    <citation type="journal article" date="2009" name="PLoS Biol.">
        <title>Lineage-specific biology revealed by a finished genome assembly of the mouse.</title>
        <authorList>
            <person name="Church D.M."/>
            <person name="Goodstadt L."/>
            <person name="Hillier L.W."/>
            <person name="Zody M.C."/>
            <person name="Goldstein S."/>
            <person name="She X."/>
            <person name="Bult C.J."/>
            <person name="Agarwala R."/>
            <person name="Cherry J.L."/>
            <person name="DiCuccio M."/>
            <person name="Hlavina W."/>
            <person name="Kapustin Y."/>
            <person name="Meric P."/>
            <person name="Maglott D."/>
            <person name="Birtle Z."/>
            <person name="Marques A.C."/>
            <person name="Graves T."/>
            <person name="Zhou S."/>
            <person name="Teague B."/>
            <person name="Potamousis K."/>
            <person name="Churas C."/>
            <person name="Place M."/>
            <person name="Herschleb J."/>
            <person name="Runnheim R."/>
            <person name="Forrest D."/>
            <person name="Amos-Landgraf J."/>
            <person name="Schwartz D.C."/>
            <person name="Cheng Z."/>
            <person name="Lindblad-Toh K."/>
            <person name="Eichler E.E."/>
            <person name="Ponting C.P."/>
        </authorList>
    </citation>
    <scope>NUCLEOTIDE SEQUENCE [LARGE SCALE GENOMIC DNA]</scope>
    <source>
        <strain>C57BL/6J</strain>
    </source>
</reference>
<reference key="2">
    <citation type="submission" date="2007-06" db="EMBL/GenBank/DDBJ databases">
        <authorList>
            <person name="Mural R.J."/>
            <person name="Adams M.D."/>
            <person name="Myers E.W."/>
            <person name="Smith H.O."/>
            <person name="Venter J.C."/>
        </authorList>
    </citation>
    <scope>NUCLEOTIDE SEQUENCE [LARGE SCALE GENOMIC DNA]</scope>
</reference>
<reference key="3">
    <citation type="journal article" date="2004" name="Genome Res.">
        <title>The status, quality, and expansion of the NIH full-length cDNA project: the Mammalian Gene Collection (MGC).</title>
        <authorList>
            <consortium name="The MGC Project Team"/>
        </authorList>
    </citation>
    <scope>NUCLEOTIDE SEQUENCE [LARGE SCALE MRNA] (ISOFORM 2)</scope>
    <source>
        <tissue>Olfactory epithelium</tissue>
    </source>
</reference>
<reference key="4">
    <citation type="journal article" date="2005" name="Science">
        <title>The transcriptional landscape of the mammalian genome.</title>
        <authorList>
            <person name="Carninci P."/>
            <person name="Kasukawa T."/>
            <person name="Katayama S."/>
            <person name="Gough J."/>
            <person name="Frith M.C."/>
            <person name="Maeda N."/>
            <person name="Oyama R."/>
            <person name="Ravasi T."/>
            <person name="Lenhard B."/>
            <person name="Wells C."/>
            <person name="Kodzius R."/>
            <person name="Shimokawa K."/>
            <person name="Bajic V.B."/>
            <person name="Brenner S.E."/>
            <person name="Batalov S."/>
            <person name="Forrest A.R."/>
            <person name="Zavolan M."/>
            <person name="Davis M.J."/>
            <person name="Wilming L.G."/>
            <person name="Aidinis V."/>
            <person name="Allen J.E."/>
            <person name="Ambesi-Impiombato A."/>
            <person name="Apweiler R."/>
            <person name="Aturaliya R.N."/>
            <person name="Bailey T.L."/>
            <person name="Bansal M."/>
            <person name="Baxter L."/>
            <person name="Beisel K.W."/>
            <person name="Bersano T."/>
            <person name="Bono H."/>
            <person name="Chalk A.M."/>
            <person name="Chiu K.P."/>
            <person name="Choudhary V."/>
            <person name="Christoffels A."/>
            <person name="Clutterbuck D.R."/>
            <person name="Crowe M.L."/>
            <person name="Dalla E."/>
            <person name="Dalrymple B.P."/>
            <person name="de Bono B."/>
            <person name="Della Gatta G."/>
            <person name="di Bernardo D."/>
            <person name="Down T."/>
            <person name="Engstrom P."/>
            <person name="Fagiolini M."/>
            <person name="Faulkner G."/>
            <person name="Fletcher C.F."/>
            <person name="Fukushima T."/>
            <person name="Furuno M."/>
            <person name="Futaki S."/>
            <person name="Gariboldi M."/>
            <person name="Georgii-Hemming P."/>
            <person name="Gingeras T.R."/>
            <person name="Gojobori T."/>
            <person name="Green R.E."/>
            <person name="Gustincich S."/>
            <person name="Harbers M."/>
            <person name="Hayashi Y."/>
            <person name="Hensch T.K."/>
            <person name="Hirokawa N."/>
            <person name="Hill D."/>
            <person name="Huminiecki L."/>
            <person name="Iacono M."/>
            <person name="Ikeo K."/>
            <person name="Iwama A."/>
            <person name="Ishikawa T."/>
            <person name="Jakt M."/>
            <person name="Kanapin A."/>
            <person name="Katoh M."/>
            <person name="Kawasawa Y."/>
            <person name="Kelso J."/>
            <person name="Kitamura H."/>
            <person name="Kitano H."/>
            <person name="Kollias G."/>
            <person name="Krishnan S.P."/>
            <person name="Kruger A."/>
            <person name="Kummerfeld S.K."/>
            <person name="Kurochkin I.V."/>
            <person name="Lareau L.F."/>
            <person name="Lazarevic D."/>
            <person name="Lipovich L."/>
            <person name="Liu J."/>
            <person name="Liuni S."/>
            <person name="McWilliam S."/>
            <person name="Madan Babu M."/>
            <person name="Madera M."/>
            <person name="Marchionni L."/>
            <person name="Matsuda H."/>
            <person name="Matsuzawa S."/>
            <person name="Miki H."/>
            <person name="Mignone F."/>
            <person name="Miyake S."/>
            <person name="Morris K."/>
            <person name="Mottagui-Tabar S."/>
            <person name="Mulder N."/>
            <person name="Nakano N."/>
            <person name="Nakauchi H."/>
            <person name="Ng P."/>
            <person name="Nilsson R."/>
            <person name="Nishiguchi S."/>
            <person name="Nishikawa S."/>
            <person name="Nori F."/>
            <person name="Ohara O."/>
            <person name="Okazaki Y."/>
            <person name="Orlando V."/>
            <person name="Pang K.C."/>
            <person name="Pavan W.J."/>
            <person name="Pavesi G."/>
            <person name="Pesole G."/>
            <person name="Petrovsky N."/>
            <person name="Piazza S."/>
            <person name="Reed J."/>
            <person name="Reid J.F."/>
            <person name="Ring B.Z."/>
            <person name="Ringwald M."/>
            <person name="Rost B."/>
            <person name="Ruan Y."/>
            <person name="Salzberg S.L."/>
            <person name="Sandelin A."/>
            <person name="Schneider C."/>
            <person name="Schoenbach C."/>
            <person name="Sekiguchi K."/>
            <person name="Semple C.A."/>
            <person name="Seno S."/>
            <person name="Sessa L."/>
            <person name="Sheng Y."/>
            <person name="Shibata Y."/>
            <person name="Shimada H."/>
            <person name="Shimada K."/>
            <person name="Silva D."/>
            <person name="Sinclair B."/>
            <person name="Sperling S."/>
            <person name="Stupka E."/>
            <person name="Sugiura K."/>
            <person name="Sultana R."/>
            <person name="Takenaka Y."/>
            <person name="Taki K."/>
            <person name="Tammoja K."/>
            <person name="Tan S.L."/>
            <person name="Tang S."/>
            <person name="Taylor M.S."/>
            <person name="Tegner J."/>
            <person name="Teichmann S.A."/>
            <person name="Ueda H.R."/>
            <person name="van Nimwegen E."/>
            <person name="Verardo R."/>
            <person name="Wei C.L."/>
            <person name="Yagi K."/>
            <person name="Yamanishi H."/>
            <person name="Zabarovsky E."/>
            <person name="Zhu S."/>
            <person name="Zimmer A."/>
            <person name="Hide W."/>
            <person name="Bult C."/>
            <person name="Grimmond S.M."/>
            <person name="Teasdale R.D."/>
            <person name="Liu E.T."/>
            <person name="Brusic V."/>
            <person name="Quackenbush J."/>
            <person name="Wahlestedt C."/>
            <person name="Mattick J.S."/>
            <person name="Hume D.A."/>
            <person name="Kai C."/>
            <person name="Sasaki D."/>
            <person name="Tomaru Y."/>
            <person name="Fukuda S."/>
            <person name="Kanamori-Katayama M."/>
            <person name="Suzuki M."/>
            <person name="Aoki J."/>
            <person name="Arakawa T."/>
            <person name="Iida J."/>
            <person name="Imamura K."/>
            <person name="Itoh M."/>
            <person name="Kato T."/>
            <person name="Kawaji H."/>
            <person name="Kawagashira N."/>
            <person name="Kawashima T."/>
            <person name="Kojima M."/>
            <person name="Kondo S."/>
            <person name="Konno H."/>
            <person name="Nakano K."/>
            <person name="Ninomiya N."/>
            <person name="Nishio T."/>
            <person name="Okada M."/>
            <person name="Plessy C."/>
            <person name="Shibata K."/>
            <person name="Shiraki T."/>
            <person name="Suzuki S."/>
            <person name="Tagami M."/>
            <person name="Waki K."/>
            <person name="Watahiki A."/>
            <person name="Okamura-Oho Y."/>
            <person name="Suzuki H."/>
            <person name="Kawai J."/>
            <person name="Hayashizaki Y."/>
        </authorList>
    </citation>
    <scope>NUCLEOTIDE SEQUENCE [LARGE SCALE MRNA] OF 351-622 (ISOFORM 1)</scope>
    <source>
        <strain>C57BL/6J</strain>
        <tissue>Testis</tissue>
    </source>
</reference>
<reference key="5">
    <citation type="journal article" date="2020" name="Development">
        <title>The FOXJ1 target Cfap206 is required for sperm motility, mucociliary clearance of the airways and brain development.</title>
        <authorList>
            <person name="Beckers A."/>
            <person name="Adis C."/>
            <person name="Schuster-Gossler K."/>
            <person name="Tveriakhina L."/>
            <person name="Ott T."/>
            <person name="Fuhl F."/>
            <person name="Hegermann J."/>
            <person name="Boldt K."/>
            <person name="Serth K."/>
            <person name="Rachev E."/>
            <person name="Alten L."/>
            <person name="Kremmer E."/>
            <person name="Ueffing M."/>
            <person name="Blum M."/>
            <person name="Gossler A."/>
        </authorList>
    </citation>
    <scope>FUNCTION (ISOFORMS 1 AND 2)</scope>
    <scope>SUBCELLULAR LOCATION</scope>
    <scope>DISRUPTION PHENOTYPE</scope>
    <scope>TISSUE SPECIFICITY (ISOFORMS 1 AND 2)</scope>
    <scope>DEVELOPMENTAL STAGE</scope>
</reference>
<sequence>MPPTQAESVIKNIIREIGQECAAHGEIASETVVAFMVKAVVLDPSNGFNMDRTLIKTDVQKLVKLCVARLLDNKNPSLDTIKMQVYFDMNYTSREDFLEEHHRVLESRLGIVSREITDNRASAREELENLYRKIVSYVLLRSGLGSPTDIKIVREATAALQSVFPQAELATFLTLSKKDKERQLKELTMIVTGIRLFNRDCGKGGEGIDDLPAILHEAIPTTTQHIDSQLQIAQDQAFRYTAILEKVTNNPLMAKELQPYMLKEALYNVRQYEIFLQTVLSDIITCAEEVEMMIKQLAAQLEQLKMAVKSKTAVPTSQVFPIFVALASLWMSFQDETVLISVLSNLTTNLELFLGTHELLFPEKVMLGLLDGVVVKSDLTRIEEHMEERVELADFRTQEWLFPETTANFNKLLIQYRGFCGYTFAVTDGLLLPGNPAIGILKYKEKYYTFSTRDAAYTFAENPDHYIHLIKEKAKKNAELIQLLELHQQFETLIPYSQMRDVDKHYIKPITKCDNGTQTDTHILPPTTMRTYEWNEWELRRKAIKLANLRQKITHSVQTDLSHMRRDNTSQVYPLKEASTQSKREGSSRVPRPQIFIAGLRGGQSKTTYGVKVNLTRAVDET</sequence>
<accession>Q6PE87</accession>
<accession>A2AT45</accession>
<accession>A2AT46</accession>
<accession>A2AT47</accession>
<accession>Q9DAP6</accession>
<proteinExistence type="evidence at transcript level"/>